<keyword id="KW-0436">Ligase</keyword>
<sequence>MNTFLIDYRDIQTPKKGFSGLFNDYSHEGQMHDKLTEKFFHFDYLKEADYYKHLNTLVSRSFRRKELAELLIRQNRRFGTAAKHLESIEKALSPRCMFVITGQQPGLFTGPLYSIYKALTAVIVAERQKAMFPEYDFIPLFWIEGEDHDFEESATTSIIDAGQIQQVSLDPWKRLPGQMVSRSAMGPGITDTLSDFTSMLQESDYREQIVSMLQEIYTPDSSLELAFGKTMAHLFKDYPLIFLSASDPDFKNLAKEIYYRELATCPHTSHTIIEQSSLLENMGYQTQVKPRAVNLFYVNHHDQRMKIEQSSADSFSIVPDRHRYSRHQILEMCDDHPERFSPNVILRPVVQDHVLPTFAYIAGPGEISYMAQYRKTYEHFGLKMPFIIPRGSFTLIEPAVRRTMDKVLQKTGRLTQSRKQLYHTAFHDLRILQKKAISGAENHDFDTLLDRTEKNILAELEALSPTLGKLDPNLEQVLAGSLVQIEKVMTGIRQKTHRAGRRKHDELVAQLDKAAAGIFPEDLPQERVINIFYYLNKYGWGILDAFATMLRAHSSESHIILEL</sequence>
<proteinExistence type="inferred from homology"/>
<name>BSHC_CHLPB</name>
<comment type="similarity">
    <text evidence="1">Belongs to the BshC family.</text>
</comment>
<evidence type="ECO:0000255" key="1">
    <source>
        <dbReference type="HAMAP-Rule" id="MF_01867"/>
    </source>
</evidence>
<gene>
    <name evidence="1" type="primary">bshC</name>
    <name type="ordered locus">Cphamn1_2042</name>
</gene>
<organism>
    <name type="scientific">Chlorobium phaeobacteroides (strain BS1)</name>
    <dbReference type="NCBI Taxonomy" id="331678"/>
    <lineage>
        <taxon>Bacteria</taxon>
        <taxon>Pseudomonadati</taxon>
        <taxon>Chlorobiota</taxon>
        <taxon>Chlorobiia</taxon>
        <taxon>Chlorobiales</taxon>
        <taxon>Chlorobiaceae</taxon>
        <taxon>Chlorobium/Pelodictyon group</taxon>
        <taxon>Chlorobium</taxon>
    </lineage>
</organism>
<feature type="chain" id="PRO_0000378228" description="Putative cysteine ligase BshC">
    <location>
        <begin position="1"/>
        <end position="563"/>
    </location>
</feature>
<accession>B3EML3</accession>
<reference key="1">
    <citation type="submission" date="2008-06" db="EMBL/GenBank/DDBJ databases">
        <title>Complete sequence of Chlorobium phaeobacteroides BS1.</title>
        <authorList>
            <consortium name="US DOE Joint Genome Institute"/>
            <person name="Lucas S."/>
            <person name="Copeland A."/>
            <person name="Lapidus A."/>
            <person name="Glavina del Rio T."/>
            <person name="Dalin E."/>
            <person name="Tice H."/>
            <person name="Bruce D."/>
            <person name="Goodwin L."/>
            <person name="Pitluck S."/>
            <person name="Schmutz J."/>
            <person name="Larimer F."/>
            <person name="Land M."/>
            <person name="Hauser L."/>
            <person name="Kyrpides N."/>
            <person name="Ovchinnikova G."/>
            <person name="Li T."/>
            <person name="Liu Z."/>
            <person name="Zhao F."/>
            <person name="Overmann J."/>
            <person name="Bryant D.A."/>
            <person name="Richardson P."/>
        </authorList>
    </citation>
    <scope>NUCLEOTIDE SEQUENCE [LARGE SCALE GENOMIC DNA]</scope>
    <source>
        <strain>BS1</strain>
    </source>
</reference>
<protein>
    <recommendedName>
        <fullName evidence="1">Putative cysteine ligase BshC</fullName>
        <ecNumber evidence="1">6.-.-.-</ecNumber>
    </recommendedName>
</protein>
<dbReference type="EC" id="6.-.-.-" evidence="1"/>
<dbReference type="EMBL" id="CP001101">
    <property type="protein sequence ID" value="ACE04952.1"/>
    <property type="molecule type" value="Genomic_DNA"/>
</dbReference>
<dbReference type="SMR" id="B3EML3"/>
<dbReference type="STRING" id="331678.Cphamn1_2042"/>
<dbReference type="KEGG" id="cpb:Cphamn1_2042"/>
<dbReference type="eggNOG" id="COG4365">
    <property type="taxonomic scope" value="Bacteria"/>
</dbReference>
<dbReference type="HOGENOM" id="CLU_022249_2_0_10"/>
<dbReference type="OrthoDB" id="9765151at2"/>
<dbReference type="GO" id="GO:0016874">
    <property type="term" value="F:ligase activity"/>
    <property type="evidence" value="ECO:0007669"/>
    <property type="project" value="UniProtKB-UniRule"/>
</dbReference>
<dbReference type="HAMAP" id="MF_01867">
    <property type="entry name" value="BshC"/>
    <property type="match status" value="1"/>
</dbReference>
<dbReference type="InterPro" id="IPR011199">
    <property type="entry name" value="Bacillithiol_biosynth_BshC"/>
</dbReference>
<dbReference type="InterPro" id="IPR055399">
    <property type="entry name" value="CC_BshC"/>
</dbReference>
<dbReference type="InterPro" id="IPR055398">
    <property type="entry name" value="Rossmann-like_BshC"/>
</dbReference>
<dbReference type="NCBIfam" id="TIGR03998">
    <property type="entry name" value="thiol_BshC"/>
    <property type="match status" value="1"/>
</dbReference>
<dbReference type="Pfam" id="PF24850">
    <property type="entry name" value="CC_BshC"/>
    <property type="match status" value="1"/>
</dbReference>
<dbReference type="Pfam" id="PF10079">
    <property type="entry name" value="Rossmann-like_BshC"/>
    <property type="match status" value="1"/>
</dbReference>
<dbReference type="PIRSF" id="PIRSF012535">
    <property type="entry name" value="UCP012535"/>
    <property type="match status" value="1"/>
</dbReference>